<proteinExistence type="inferred from homology"/>
<name>CLPB_SHIFL</name>
<keyword id="KW-0007">Acetylation</keyword>
<keyword id="KW-0067">ATP-binding</keyword>
<keyword id="KW-0143">Chaperone</keyword>
<keyword id="KW-0175">Coiled coil</keyword>
<keyword id="KW-0963">Cytoplasm</keyword>
<keyword id="KW-0547">Nucleotide-binding</keyword>
<keyword id="KW-1185">Reference proteome</keyword>
<keyword id="KW-0677">Repeat</keyword>
<keyword id="KW-0346">Stress response</keyword>
<organism>
    <name type="scientific">Shigella flexneri</name>
    <dbReference type="NCBI Taxonomy" id="623"/>
    <lineage>
        <taxon>Bacteria</taxon>
        <taxon>Pseudomonadati</taxon>
        <taxon>Pseudomonadota</taxon>
        <taxon>Gammaproteobacteria</taxon>
        <taxon>Enterobacterales</taxon>
        <taxon>Enterobacteriaceae</taxon>
        <taxon>Shigella</taxon>
    </lineage>
</organism>
<comment type="function">
    <text evidence="1">Part of a stress-induced multi-chaperone system, it is involved in the recovery of the cell from heat-induced damage, in cooperation with DnaK, DnaJ and GrpE. Acts before DnaK, in the processing of protein aggregates. Protein binding stimulates the ATPase activity; ATP hydrolysis unfolds the denatured protein aggregates, which probably helps expose new hydrophobic binding sites on the surface of ClpB-bound aggregates, contributing to the solubilization and refolding of denatured protein aggregates by DnaK (By similarity).</text>
</comment>
<comment type="subunit">
    <text evidence="1">Homohexamer. The oligomerization is ATP-dependent (By similarity).</text>
</comment>
<comment type="subcellular location">
    <subcellularLocation>
        <location evidence="3">Cytoplasm</location>
    </subcellularLocation>
</comment>
<comment type="domain">
    <text evidence="1">The Clp repeat (R) domain probably functions as a substrate-discriminating domain, recruiting aggregated proteins to the ClpB hexamer and/or stabilizing bound proteins. The NBD2 domain is responsible for oligomerization, whereas the NBD1 domain stabilizes the hexamer probably in an ATP-dependent manner. The movement of the coiled-coil domain is essential for ClpB ability to rescue proteins from an aggregated state, probably by pulling apart large aggregated proteins, which are bound between the coiled-coils motifs of adjacent ClpB subunits in the functional hexamer (By similarity).</text>
</comment>
<comment type="similarity">
    <text evidence="3">Belongs to the ClpA/ClpB family.</text>
</comment>
<gene>
    <name type="primary">clpB</name>
    <name type="ordered locus">SF2655</name>
    <name type="ordered locus">S2831</name>
</gene>
<accession>Q7UBW5</accession>
<accession>Q83QH9</accession>
<evidence type="ECO:0000250" key="1"/>
<evidence type="ECO:0000255" key="2">
    <source>
        <dbReference type="PROSITE-ProRule" id="PRU01251"/>
    </source>
</evidence>
<evidence type="ECO:0000305" key="3"/>
<dbReference type="EMBL" id="AE005674">
    <property type="protein sequence ID" value="AAN44151.2"/>
    <property type="molecule type" value="Genomic_DNA"/>
</dbReference>
<dbReference type="EMBL" id="AE014073">
    <property type="protein sequence ID" value="AAP17974.1"/>
    <property type="molecule type" value="Genomic_DNA"/>
</dbReference>
<dbReference type="RefSeq" id="NP_708444.2">
    <property type="nucleotide sequence ID" value="NC_004337.2"/>
</dbReference>
<dbReference type="RefSeq" id="WP_011069474.1">
    <property type="nucleotide sequence ID" value="NZ_CP123365.1"/>
</dbReference>
<dbReference type="SMR" id="Q7UBW5"/>
<dbReference type="STRING" id="198214.SF2655"/>
<dbReference type="PaxDb" id="198214-SF2655"/>
<dbReference type="GeneID" id="1027322"/>
<dbReference type="KEGG" id="sfl:SF2655"/>
<dbReference type="KEGG" id="sfx:S2831"/>
<dbReference type="PATRIC" id="fig|198214.7.peg.3164"/>
<dbReference type="HOGENOM" id="CLU_005070_4_0_6"/>
<dbReference type="Proteomes" id="UP000001006">
    <property type="component" value="Chromosome"/>
</dbReference>
<dbReference type="Proteomes" id="UP000002673">
    <property type="component" value="Chromosome"/>
</dbReference>
<dbReference type="GO" id="GO:0005737">
    <property type="term" value="C:cytoplasm"/>
    <property type="evidence" value="ECO:0007669"/>
    <property type="project" value="UniProtKB-SubCell"/>
</dbReference>
<dbReference type="GO" id="GO:0005524">
    <property type="term" value="F:ATP binding"/>
    <property type="evidence" value="ECO:0007669"/>
    <property type="project" value="UniProtKB-KW"/>
</dbReference>
<dbReference type="GO" id="GO:0016887">
    <property type="term" value="F:ATP hydrolysis activity"/>
    <property type="evidence" value="ECO:0007669"/>
    <property type="project" value="InterPro"/>
</dbReference>
<dbReference type="GO" id="GO:0034605">
    <property type="term" value="P:cellular response to heat"/>
    <property type="evidence" value="ECO:0007669"/>
    <property type="project" value="TreeGrafter"/>
</dbReference>
<dbReference type="GO" id="GO:0042026">
    <property type="term" value="P:protein refolding"/>
    <property type="evidence" value="ECO:0007669"/>
    <property type="project" value="InterPro"/>
</dbReference>
<dbReference type="CDD" id="cd00009">
    <property type="entry name" value="AAA"/>
    <property type="match status" value="1"/>
</dbReference>
<dbReference type="CDD" id="cd19499">
    <property type="entry name" value="RecA-like_ClpB_Hsp104-like"/>
    <property type="match status" value="1"/>
</dbReference>
<dbReference type="FunFam" id="1.10.1780.10:FF:000003">
    <property type="entry name" value="ATP-dependent chaperone ClpB"/>
    <property type="match status" value="1"/>
</dbReference>
<dbReference type="FunFam" id="1.10.8.60:FF:000017">
    <property type="entry name" value="ATP-dependent chaperone ClpB"/>
    <property type="match status" value="1"/>
</dbReference>
<dbReference type="FunFam" id="3.40.50.300:FF:000120">
    <property type="entry name" value="ATP-dependent chaperone ClpB"/>
    <property type="match status" value="1"/>
</dbReference>
<dbReference type="FunFam" id="3.40.50.300:FF:000025">
    <property type="entry name" value="ATP-dependent Clp protease subunit"/>
    <property type="match status" value="1"/>
</dbReference>
<dbReference type="FunFam" id="3.40.50.300:FF:000010">
    <property type="entry name" value="Chaperone clpB 1, putative"/>
    <property type="match status" value="1"/>
</dbReference>
<dbReference type="Gene3D" id="1.10.8.60">
    <property type="match status" value="1"/>
</dbReference>
<dbReference type="Gene3D" id="1.10.1780.10">
    <property type="entry name" value="Clp, N-terminal domain"/>
    <property type="match status" value="1"/>
</dbReference>
<dbReference type="Gene3D" id="3.40.50.300">
    <property type="entry name" value="P-loop containing nucleotide triphosphate hydrolases"/>
    <property type="match status" value="3"/>
</dbReference>
<dbReference type="InterPro" id="IPR003593">
    <property type="entry name" value="AAA+_ATPase"/>
</dbReference>
<dbReference type="InterPro" id="IPR003959">
    <property type="entry name" value="ATPase_AAA_core"/>
</dbReference>
<dbReference type="InterPro" id="IPR017730">
    <property type="entry name" value="Chaperonin_ClpB"/>
</dbReference>
<dbReference type="InterPro" id="IPR019489">
    <property type="entry name" value="Clp_ATPase_C"/>
</dbReference>
<dbReference type="InterPro" id="IPR036628">
    <property type="entry name" value="Clp_N_dom_sf"/>
</dbReference>
<dbReference type="InterPro" id="IPR004176">
    <property type="entry name" value="Clp_R_dom"/>
</dbReference>
<dbReference type="InterPro" id="IPR001270">
    <property type="entry name" value="ClpA/B"/>
</dbReference>
<dbReference type="InterPro" id="IPR018368">
    <property type="entry name" value="ClpA/B_CS1"/>
</dbReference>
<dbReference type="InterPro" id="IPR028299">
    <property type="entry name" value="ClpA/B_CS2"/>
</dbReference>
<dbReference type="InterPro" id="IPR041546">
    <property type="entry name" value="ClpA/ClpB_AAA_lid"/>
</dbReference>
<dbReference type="InterPro" id="IPR050130">
    <property type="entry name" value="ClpA_ClpB"/>
</dbReference>
<dbReference type="InterPro" id="IPR027417">
    <property type="entry name" value="P-loop_NTPase"/>
</dbReference>
<dbReference type="NCBIfam" id="TIGR03346">
    <property type="entry name" value="chaperone_ClpB"/>
    <property type="match status" value="1"/>
</dbReference>
<dbReference type="NCBIfam" id="NF008118">
    <property type="entry name" value="PRK10865.1"/>
    <property type="match status" value="1"/>
</dbReference>
<dbReference type="PANTHER" id="PTHR11638">
    <property type="entry name" value="ATP-DEPENDENT CLP PROTEASE"/>
    <property type="match status" value="1"/>
</dbReference>
<dbReference type="PANTHER" id="PTHR11638:SF18">
    <property type="entry name" value="HEAT SHOCK PROTEIN 104"/>
    <property type="match status" value="1"/>
</dbReference>
<dbReference type="Pfam" id="PF00004">
    <property type="entry name" value="AAA"/>
    <property type="match status" value="1"/>
</dbReference>
<dbReference type="Pfam" id="PF07724">
    <property type="entry name" value="AAA_2"/>
    <property type="match status" value="1"/>
</dbReference>
<dbReference type="Pfam" id="PF17871">
    <property type="entry name" value="AAA_lid_9"/>
    <property type="match status" value="1"/>
</dbReference>
<dbReference type="Pfam" id="PF02861">
    <property type="entry name" value="Clp_N"/>
    <property type="match status" value="2"/>
</dbReference>
<dbReference type="Pfam" id="PF10431">
    <property type="entry name" value="ClpB_D2-small"/>
    <property type="match status" value="1"/>
</dbReference>
<dbReference type="PRINTS" id="PR00300">
    <property type="entry name" value="CLPPROTEASEA"/>
</dbReference>
<dbReference type="SMART" id="SM00382">
    <property type="entry name" value="AAA"/>
    <property type="match status" value="2"/>
</dbReference>
<dbReference type="SMART" id="SM01086">
    <property type="entry name" value="ClpB_D2-small"/>
    <property type="match status" value="1"/>
</dbReference>
<dbReference type="SUPFAM" id="SSF81923">
    <property type="entry name" value="Double Clp-N motif"/>
    <property type="match status" value="1"/>
</dbReference>
<dbReference type="SUPFAM" id="SSF52540">
    <property type="entry name" value="P-loop containing nucleoside triphosphate hydrolases"/>
    <property type="match status" value="2"/>
</dbReference>
<dbReference type="PROSITE" id="PS51903">
    <property type="entry name" value="CLP_R"/>
    <property type="match status" value="1"/>
</dbReference>
<dbReference type="PROSITE" id="PS00870">
    <property type="entry name" value="CLPAB_1"/>
    <property type="match status" value="1"/>
</dbReference>
<dbReference type="PROSITE" id="PS00871">
    <property type="entry name" value="CLPAB_2"/>
    <property type="match status" value="1"/>
</dbReference>
<sequence>MRLDRLTNKFQLALADAQSLALGHDNQFIEPLHLMSALLNQEGGSVSPLLTSAGINAGQLRTDINQALNRLPQVEGTGGDVQPSQDLVRVLNLCDKLAQKRGDNFISSELFVLAALESRGTLADILKATGATTANITQAIEQMRGGESVNDQGAEDQRQALKKYTIDLTERAEQGKLDPVIGRDEEIRRTIQVLQRRTKNNPVLIGEPGVGKTAIVEGLAQRIINGEVPEGLKGRRVLALDMGALVAGAKYRGEFEERLKGVLNDLAKQEGNVILFIDELHTMVGAGKADGAMDAGNMLKPALARGELHCVGATTLDEYRQYIEKDAALERRFQKVFVAEPSVQDTIAILRGVKERFELLHHVQITDPAIVAAATLSHRYIADRQLPDKAIDLIDEAASSIRMQIDSKPEELDRLDRRIIQLKLEQQALMKESDEASKKRLDMLNEELSDKERQYSELEEEWKAEKASLSGTQTIKAELEQAKIAIEQARRVGDLARMSELQYGKIPELEKQLEAATQLEGKTMRLLRNKVTDAEIAEVLARWTGIPVSRMMESEREKLLRMEQELHHRVIGQNEAVDAVSNAIRRSRAGLADPNRPIGSFLFLGPTGVGKTELCKALANFMFDSDEAMVRIDMSEFMEKHSVSRLVGAPPGYVGYEEGGYLTEAVRRRPYSVILLDEVEKAHPDVFNILLQVLDDGRLTDGQGRTVDFRNTVVIMTSNLGSDLIQERFGELDYAHMKELVLGVVSHNFRPEFINRIDEVVVFHPLGEQHIASIAQIQLKRLYKRLEERGYEIHISDEALKLLSENGYDPVYGARPLKRAIQQQIENPLAQQILSGELVPGKVIRLEVNEDRIVAVQ</sequence>
<protein>
    <recommendedName>
        <fullName>Chaperone protein ClpB</fullName>
    </recommendedName>
</protein>
<feature type="chain" id="PRO_0000191174" description="Chaperone protein ClpB">
    <location>
        <begin position="1"/>
        <end position="857"/>
    </location>
</feature>
<feature type="domain" description="Clp R" evidence="2">
    <location>
        <begin position="3"/>
        <end position="146"/>
    </location>
</feature>
<feature type="region of interest" description="Repeat 1" evidence="2">
    <location>
        <begin position="6"/>
        <end position="71"/>
    </location>
</feature>
<feature type="region of interest" description="Repeat 2" evidence="2">
    <location>
        <begin position="83"/>
        <end position="146"/>
    </location>
</feature>
<feature type="region of interest" description="NBD1" evidence="1">
    <location>
        <begin position="159"/>
        <end position="340"/>
    </location>
</feature>
<feature type="region of interest" description="Linker" evidence="1">
    <location>
        <begin position="341"/>
        <end position="545"/>
    </location>
</feature>
<feature type="region of interest" description="NBD2" evidence="1">
    <location>
        <begin position="555"/>
        <end position="765"/>
    </location>
</feature>
<feature type="region of interest" description="C-terminal" evidence="1">
    <location>
        <begin position="766"/>
        <end position="857"/>
    </location>
</feature>
<feature type="coiled-coil region" evidence="1">
    <location>
        <begin position="391"/>
        <end position="525"/>
    </location>
</feature>
<feature type="binding site" evidence="1">
    <location>
        <begin position="206"/>
        <end position="213"/>
    </location>
    <ligand>
        <name>ATP</name>
        <dbReference type="ChEBI" id="CHEBI:30616"/>
        <label>1</label>
    </ligand>
</feature>
<feature type="binding site" evidence="1">
    <location>
        <begin position="605"/>
        <end position="612"/>
    </location>
    <ligand>
        <name>ATP</name>
        <dbReference type="ChEBI" id="CHEBI:30616"/>
        <label>2</label>
    </ligand>
</feature>
<feature type="modified residue" description="N6-acetyllysine" evidence="1">
    <location>
        <position position="96"/>
    </location>
</feature>
<feature type="modified residue" description="N6-acetyllysine" evidence="1">
    <location>
        <position position="176"/>
    </location>
</feature>
<feature type="modified residue" description="N6-acetyllysine" evidence="1">
    <location>
        <position position="640"/>
    </location>
</feature>
<feature type="sequence conflict" description="In Ref. 3; AAP17974." evidence="3" ref="3">
    <original>Q</original>
    <variation>E</variation>
    <location>
        <position position="344"/>
    </location>
</feature>
<feature type="sequence conflict" description="In Ref. 3; AAP17974." evidence="3" ref="3">
    <original>V</original>
    <variation>L</variation>
    <location>
        <position position="353"/>
    </location>
</feature>
<feature type="sequence conflict" description="In Ref. 3; AAP17974." evidence="3" ref="3">
    <original>F</original>
    <variation>Y</variation>
    <location>
        <position position="357"/>
    </location>
</feature>
<feature type="sequence conflict" description="In Ref. 3; AAP17974." evidence="3" ref="3">
    <original>L</original>
    <variation>H</variation>
    <location>
        <position position="360"/>
    </location>
</feature>
<reference key="1">
    <citation type="journal article" date="2002" name="Nucleic Acids Res.">
        <title>Genome sequence of Shigella flexneri 2a: insights into pathogenicity through comparison with genomes of Escherichia coli K12 and O157.</title>
        <authorList>
            <person name="Jin Q."/>
            <person name="Yuan Z."/>
            <person name="Xu J."/>
            <person name="Wang Y."/>
            <person name="Shen Y."/>
            <person name="Lu W."/>
            <person name="Wang J."/>
            <person name="Liu H."/>
            <person name="Yang J."/>
            <person name="Yang F."/>
            <person name="Zhang X."/>
            <person name="Zhang J."/>
            <person name="Yang G."/>
            <person name="Wu H."/>
            <person name="Qu D."/>
            <person name="Dong J."/>
            <person name="Sun L."/>
            <person name="Xue Y."/>
            <person name="Zhao A."/>
            <person name="Gao Y."/>
            <person name="Zhu J."/>
            <person name="Kan B."/>
            <person name="Ding K."/>
            <person name="Chen S."/>
            <person name="Cheng H."/>
            <person name="Yao Z."/>
            <person name="He B."/>
            <person name="Chen R."/>
            <person name="Ma D."/>
            <person name="Qiang B."/>
            <person name="Wen Y."/>
            <person name="Hou Y."/>
            <person name="Yu J."/>
        </authorList>
    </citation>
    <scope>NUCLEOTIDE SEQUENCE [LARGE SCALE GENOMIC DNA]</scope>
    <source>
        <strain>301 / Serotype 2a</strain>
    </source>
</reference>
<reference key="2">
    <citation type="submission" date="2011-08" db="EMBL/GenBank/DDBJ databases">
        <authorList>
            <person name="Jin Q."/>
            <person name="Shen Y."/>
            <person name="Wang J.H."/>
            <person name="Liu H."/>
            <person name="Yang J."/>
            <person name="Yang F."/>
            <person name="Zhang X.B."/>
            <person name="Zhang J.Y."/>
            <person name="Yang G.W."/>
            <person name="Wu H.T."/>
            <person name="Dong J."/>
            <person name="Sun L.L."/>
            <person name="Xue Y."/>
            <person name="Zhao A.L."/>
            <person name="Gao Y.S."/>
            <person name="Zhu J.P."/>
            <person name="Chen S.X."/>
            <person name="Yao Z.J."/>
            <person name="Wang Y."/>
            <person name="Lu W.C."/>
            <person name="Qiang B.Q."/>
            <person name="Wen Y.M."/>
            <person name="Hou Y.D."/>
        </authorList>
    </citation>
    <scope>SEQUENCE REVISION TO 344; 353; 357 AND 360</scope>
</reference>
<reference key="3">
    <citation type="journal article" date="2003" name="Infect. Immun.">
        <title>Complete genome sequence and comparative genomics of Shigella flexneri serotype 2a strain 2457T.</title>
        <authorList>
            <person name="Wei J."/>
            <person name="Goldberg M.B."/>
            <person name="Burland V."/>
            <person name="Venkatesan M.M."/>
            <person name="Deng W."/>
            <person name="Fournier G."/>
            <person name="Mayhew G.F."/>
            <person name="Plunkett G. III"/>
            <person name="Rose D.J."/>
            <person name="Darling A."/>
            <person name="Mau B."/>
            <person name="Perna N.T."/>
            <person name="Payne S.M."/>
            <person name="Runyen-Janecky L.J."/>
            <person name="Zhou S."/>
            <person name="Schwartz D.C."/>
            <person name="Blattner F.R."/>
        </authorList>
    </citation>
    <scope>NUCLEOTIDE SEQUENCE [LARGE SCALE GENOMIC DNA]</scope>
    <source>
        <strain>ATCC 700930 / 2457T / Serotype 2a</strain>
    </source>
</reference>